<evidence type="ECO:0000250" key="1">
    <source>
        <dbReference type="UniProtKB" id="P00568"/>
    </source>
</evidence>
<evidence type="ECO:0000255" key="2">
    <source>
        <dbReference type="RuleBase" id="RU003330"/>
    </source>
</evidence>
<evidence type="ECO:0000269" key="3">
    <source>
    </source>
</evidence>
<evidence type="ECO:0000269" key="4">
    <source>
    </source>
</evidence>
<evidence type="ECO:0000269" key="5">
    <source ref="4"/>
</evidence>
<evidence type="ECO:0000303" key="6">
    <source>
    </source>
</evidence>
<evidence type="ECO:0000303" key="7">
    <source>
    </source>
</evidence>
<evidence type="ECO:0000305" key="8"/>
<evidence type="ECO:0000312" key="9">
    <source>
        <dbReference type="EMBL" id="AAM95703.1"/>
    </source>
</evidence>
<evidence type="ECO:0000312" key="10">
    <source>
        <dbReference type="EMBL" id="CZT98338.1"/>
    </source>
</evidence>
<evidence type="ECO:0000312" key="11">
    <source>
        <dbReference type="Proteomes" id="UP000001450"/>
    </source>
</evidence>
<evidence type="ECO:0007744" key="12">
    <source>
        <dbReference type="PDB" id="3TLX"/>
    </source>
</evidence>
<evidence type="ECO:0007829" key="13">
    <source>
        <dbReference type="PDB" id="3TLX"/>
    </source>
</evidence>
<organism evidence="11">
    <name type="scientific">Plasmodium falciparum (isolate 3D7)</name>
    <dbReference type="NCBI Taxonomy" id="36329"/>
    <lineage>
        <taxon>Eukaryota</taxon>
        <taxon>Sar</taxon>
        <taxon>Alveolata</taxon>
        <taxon>Apicomplexa</taxon>
        <taxon>Aconoidasida</taxon>
        <taxon>Haemosporida</taxon>
        <taxon>Plasmodiidae</taxon>
        <taxon>Plasmodium</taxon>
        <taxon>Plasmodium (Laverania)</taxon>
    </lineage>
</organism>
<name>KAD1_PLAF7</name>
<accession>Q8IJV6</accession>
<accession>Q7Z0H0</accession>
<dbReference type="EC" id="2.7.4.3" evidence="3"/>
<dbReference type="EMBL" id="AY118172">
    <property type="protein sequence ID" value="AAM95703.1"/>
    <property type="molecule type" value="mRNA"/>
</dbReference>
<dbReference type="EMBL" id="LN999944">
    <property type="protein sequence ID" value="CZT98338.1"/>
    <property type="molecule type" value="Genomic_DNA"/>
</dbReference>
<dbReference type="RefSeq" id="XP_001347371.1">
    <property type="nucleotide sequence ID" value="XM_001347335.1"/>
</dbReference>
<dbReference type="PDB" id="3TLX">
    <property type="method" value="X-ray"/>
    <property type="resolution" value="2.75 A"/>
    <property type="chains" value="A/B/C/D=1-242"/>
</dbReference>
<dbReference type="PDBsum" id="3TLX"/>
<dbReference type="SMR" id="Q8IJV6"/>
<dbReference type="FunCoup" id="Q8IJV6">
    <property type="interactions" value="468"/>
</dbReference>
<dbReference type="STRING" id="36329.Q8IJV6"/>
<dbReference type="SwissPalm" id="Q8IJV6"/>
<dbReference type="PaxDb" id="5833-PF10_0086"/>
<dbReference type="EnsemblProtists" id="CZT98338">
    <property type="protein sequence ID" value="CZT98338"/>
    <property type="gene ID" value="PF3D7_1008900"/>
</dbReference>
<dbReference type="GeneID" id="810244"/>
<dbReference type="KEGG" id="pfa:PF3D7_1008900"/>
<dbReference type="VEuPathDB" id="PlasmoDB:PF3D7_1008900"/>
<dbReference type="VEuPathDB" id="PlasmoDB:Pf7G8-2_000294600"/>
<dbReference type="VEuPathDB" id="PlasmoDB:Pf7G8_100013300"/>
<dbReference type="VEuPathDB" id="PlasmoDB:PfCD01_100014100"/>
<dbReference type="VEuPathDB" id="PlasmoDB:PfDd2_100014200"/>
<dbReference type="VEuPathDB" id="PlasmoDB:PfGA01_100014200"/>
<dbReference type="VEuPathDB" id="PlasmoDB:PfGB4_100013900"/>
<dbReference type="VEuPathDB" id="PlasmoDB:PfGN01_100014500"/>
<dbReference type="VEuPathDB" id="PlasmoDB:PfHB3_100013300"/>
<dbReference type="VEuPathDB" id="PlasmoDB:PfIT_100012900"/>
<dbReference type="VEuPathDB" id="PlasmoDB:PfKE01_100014200"/>
<dbReference type="VEuPathDB" id="PlasmoDB:PfKH01_100013500"/>
<dbReference type="VEuPathDB" id="PlasmoDB:PfKH02_100014300"/>
<dbReference type="VEuPathDB" id="PlasmoDB:PfML01_100013200"/>
<dbReference type="VEuPathDB" id="PlasmoDB:PfNF135_100014400"/>
<dbReference type="VEuPathDB" id="PlasmoDB:PfNF166_100013900"/>
<dbReference type="VEuPathDB" id="PlasmoDB:PfNF54_100014100"/>
<dbReference type="VEuPathDB" id="PlasmoDB:PfSD01_100013600"/>
<dbReference type="VEuPathDB" id="PlasmoDB:PfSN01_100014300"/>
<dbReference type="VEuPathDB" id="PlasmoDB:PfTG01_100014100"/>
<dbReference type="HOGENOM" id="CLU_032354_1_2_1"/>
<dbReference type="InParanoid" id="Q8IJV6"/>
<dbReference type="OMA" id="VYHEQTA"/>
<dbReference type="OrthoDB" id="439792at2759"/>
<dbReference type="PhylomeDB" id="Q8IJV6"/>
<dbReference type="BRENDA" id="2.7.4.3">
    <property type="organism ID" value="4889"/>
</dbReference>
<dbReference type="Reactome" id="R-PFA-499943">
    <property type="pathway name" value="Interconversion of nucleotide di- and triphosphates"/>
</dbReference>
<dbReference type="Reactome" id="R-PFA-983231">
    <property type="pathway name" value="Factors involved in megakaryocyte development and platelet production"/>
</dbReference>
<dbReference type="EvolutionaryTrace" id="Q8IJV6"/>
<dbReference type="Proteomes" id="UP000001450">
    <property type="component" value="Chromosome 10"/>
</dbReference>
<dbReference type="GO" id="GO:0005737">
    <property type="term" value="C:cytoplasm"/>
    <property type="evidence" value="ECO:0000318"/>
    <property type="project" value="GO_Central"/>
</dbReference>
<dbReference type="GO" id="GO:0005829">
    <property type="term" value="C:cytosol"/>
    <property type="evidence" value="ECO:0000314"/>
    <property type="project" value="CACAO"/>
</dbReference>
<dbReference type="GO" id="GO:0005739">
    <property type="term" value="C:mitochondrion"/>
    <property type="evidence" value="ECO:0000318"/>
    <property type="project" value="GO_Central"/>
</dbReference>
<dbReference type="GO" id="GO:0004017">
    <property type="term" value="F:adenylate kinase activity"/>
    <property type="evidence" value="ECO:0000314"/>
    <property type="project" value="GeneDB"/>
</dbReference>
<dbReference type="GO" id="GO:0005524">
    <property type="term" value="F:ATP binding"/>
    <property type="evidence" value="ECO:0007669"/>
    <property type="project" value="UniProtKB-KW"/>
</dbReference>
<dbReference type="GO" id="GO:0006091">
    <property type="term" value="P:generation of precursor metabolites and energy"/>
    <property type="evidence" value="ECO:0000304"/>
    <property type="project" value="GeneDB"/>
</dbReference>
<dbReference type="CDD" id="cd01428">
    <property type="entry name" value="ADK"/>
    <property type="match status" value="1"/>
</dbReference>
<dbReference type="FunFam" id="3.40.50.300:FF:000106">
    <property type="entry name" value="Adenylate kinase mitochondrial"/>
    <property type="match status" value="1"/>
</dbReference>
<dbReference type="Gene3D" id="6.10.250.2370">
    <property type="match status" value="1"/>
</dbReference>
<dbReference type="Gene3D" id="3.40.50.300">
    <property type="entry name" value="P-loop containing nucleotide triphosphate hydrolases"/>
    <property type="match status" value="1"/>
</dbReference>
<dbReference type="HAMAP" id="MF_00235">
    <property type="entry name" value="Adenylate_kinase_Adk"/>
    <property type="match status" value="1"/>
</dbReference>
<dbReference type="InterPro" id="IPR006259">
    <property type="entry name" value="Adenyl_kin_sub"/>
</dbReference>
<dbReference type="InterPro" id="IPR000850">
    <property type="entry name" value="Adenylat/UMP-CMP_kin"/>
</dbReference>
<dbReference type="InterPro" id="IPR033690">
    <property type="entry name" value="Adenylat_kinase_CS"/>
</dbReference>
<dbReference type="InterPro" id="IPR007862">
    <property type="entry name" value="Adenylate_kinase_lid-dom"/>
</dbReference>
<dbReference type="InterPro" id="IPR027417">
    <property type="entry name" value="P-loop_NTPase"/>
</dbReference>
<dbReference type="NCBIfam" id="TIGR01351">
    <property type="entry name" value="adk"/>
    <property type="match status" value="1"/>
</dbReference>
<dbReference type="NCBIfam" id="NF001381">
    <property type="entry name" value="PRK00279.1-3"/>
    <property type="match status" value="1"/>
</dbReference>
<dbReference type="PANTHER" id="PTHR23359">
    <property type="entry name" value="NUCLEOTIDE KINASE"/>
    <property type="match status" value="1"/>
</dbReference>
<dbReference type="Pfam" id="PF00406">
    <property type="entry name" value="ADK"/>
    <property type="match status" value="1"/>
</dbReference>
<dbReference type="Pfam" id="PF05191">
    <property type="entry name" value="ADK_lid"/>
    <property type="match status" value="1"/>
</dbReference>
<dbReference type="PRINTS" id="PR00094">
    <property type="entry name" value="ADENYLTKNASE"/>
</dbReference>
<dbReference type="SUPFAM" id="SSF52540">
    <property type="entry name" value="P-loop containing nucleoside triphosphate hydrolases"/>
    <property type="match status" value="1"/>
</dbReference>
<dbReference type="PROSITE" id="PS00113">
    <property type="entry name" value="ADENYLATE_KINASE"/>
    <property type="match status" value="1"/>
</dbReference>
<gene>
    <name evidence="7" type="primary">AK1</name>
    <name evidence="6" type="synonym">AK</name>
    <name evidence="10" type="ORF">PF3D7_1008900</name>
</gene>
<sequence length="242" mass="27611">MNENLENFSTIDLLNELKRRYACLSKPDGRYIFLGAPGSGKGTQSLNLKKSHCYCHLSTGDLLREAAEKKTELGLKIKNIINEGKLVDDQMVLSLVDEKLKTPQCKKGFILDGYPRNVKQAEDLNKLLQKNQTKLDGVFYFNVPDEVLVNRISGRLIHKPSGRIYHKIFNPPKVPFRDDVTNEPLIQREDDNEDVLKKRLTVFKSETSPLISYYKNKNLLINLDATQPANDLEKKISQHIDG</sequence>
<protein>
    <recommendedName>
        <fullName evidence="7">Adenylate kinase 1</fullName>
        <shortName evidence="7">PfAK1</shortName>
        <ecNumber evidence="3">2.7.4.3</ecNumber>
    </recommendedName>
</protein>
<reference evidence="9" key="1">
    <citation type="journal article" date="2004" name="Mol. Biochem. Parasitol.">
        <title>Adenylate kinase and GTP:AMP phosphotransferase of the malarial parasite Plasmodium falciparum. Central players in cellular energy metabolism.</title>
        <authorList>
            <person name="Ulschmid J.K."/>
            <person name="Rahlfs S."/>
            <person name="Schirmer R.H."/>
            <person name="Becker K."/>
        </authorList>
    </citation>
    <scope>NUCLEOTIDE SEQUENCE [MRNA]</scope>
    <scope>FUNCTION</scope>
    <scope>CATALYTIC ACTIVITY</scope>
    <scope>ACTIVITY REGULATION</scope>
    <scope>BIOPHYSICOCHEMICAL PROPERTIES</scope>
    <source>
        <strain evidence="9">3D7</strain>
    </source>
</reference>
<reference evidence="11" key="2">
    <citation type="journal article" date="2002" name="Nature">
        <title>Genome sequence of the human malaria parasite Plasmodium falciparum.</title>
        <authorList>
            <person name="Gardner M.J."/>
            <person name="Hall N."/>
            <person name="Fung E."/>
            <person name="White O."/>
            <person name="Berriman M."/>
            <person name="Hyman R.W."/>
            <person name="Carlton J.M."/>
            <person name="Pain A."/>
            <person name="Nelson K.E."/>
            <person name="Bowman S."/>
            <person name="Paulsen I.T."/>
            <person name="James K.D."/>
            <person name="Eisen J.A."/>
            <person name="Rutherford K.M."/>
            <person name="Salzberg S.L."/>
            <person name="Craig A."/>
            <person name="Kyes S."/>
            <person name="Chan M.-S."/>
            <person name="Nene V."/>
            <person name="Shallom S.J."/>
            <person name="Suh B."/>
            <person name="Peterson J."/>
            <person name="Angiuoli S."/>
            <person name="Pertea M."/>
            <person name="Allen J."/>
            <person name="Selengut J."/>
            <person name="Haft D."/>
            <person name="Mather M.W."/>
            <person name="Vaidya A.B."/>
            <person name="Martin D.M.A."/>
            <person name="Fairlamb A.H."/>
            <person name="Fraunholz M.J."/>
            <person name="Roos D.S."/>
            <person name="Ralph S.A."/>
            <person name="McFadden G.I."/>
            <person name="Cummings L.M."/>
            <person name="Subramanian G.M."/>
            <person name="Mungall C."/>
            <person name="Venter J.C."/>
            <person name="Carucci D.J."/>
            <person name="Hoffman S.L."/>
            <person name="Newbold C."/>
            <person name="Davis R.W."/>
            <person name="Fraser C.M."/>
            <person name="Barrell B.G."/>
        </authorList>
    </citation>
    <scope>NUCLEOTIDE SEQUENCE [LARGE SCALE GENOMIC DNA]</scope>
    <source>
        <strain evidence="11">3D7</strain>
    </source>
</reference>
<reference evidence="8" key="3">
    <citation type="journal article" date="2012" name="FEBS Lett.">
        <title>Subcellular localization of adenylate kinases in Plasmodium falciparum.</title>
        <authorList>
            <person name="Ma J."/>
            <person name="Rahlfs S."/>
            <person name="Jortzik E."/>
            <person name="Schirmer R.H."/>
            <person name="Przyborski J.M."/>
            <person name="Becker K."/>
        </authorList>
    </citation>
    <scope>SUBCELLULAR LOCATION</scope>
</reference>
<reference evidence="12" key="4">
    <citation type="submission" date="2011-08" db="PDB data bank">
        <title>Crystal Structure of PF10_0086, adenylate kinase from plasmodium falciparum.</title>
        <authorList>
            <person name="Wernimont A.K."/>
            <person name="Loppnau P."/>
            <person name="Crombet L."/>
            <person name="Weadge J."/>
            <person name="Perieteanu A."/>
            <person name="Edwards A.M."/>
            <person name="Arrowsmith C.H."/>
            <person name="Park H."/>
            <person name="Bountra C."/>
            <person name="Hui R."/>
            <person name="Amani M."/>
        </authorList>
    </citation>
    <scope>X-RAY CRYSTALLOGRAPHY (2.75 ANGSTROMS) IN COMPLEX WITH ADP; AMP AND ATP</scope>
</reference>
<keyword id="KW-0002">3D-structure</keyword>
<keyword id="KW-0067">ATP-binding</keyword>
<keyword id="KW-0963">Cytoplasm</keyword>
<keyword id="KW-0418">Kinase</keyword>
<keyword id="KW-0547">Nucleotide-binding</keyword>
<keyword id="KW-1185">Reference proteome</keyword>
<keyword id="KW-0808">Transferase</keyword>
<proteinExistence type="evidence at protein level"/>
<comment type="function">
    <text evidence="3">Catalyzes the reversible transfer of the terminal phosphate group between ATP and AMP (PubMed:15478799). Has very low activity with CTP, GTP, ITP and UTP and no activity with GMP, CMP, UMP or IMP in vitro (PubMed:15478799).</text>
</comment>
<comment type="catalytic activity">
    <reaction evidence="3">
        <text>AMP + ATP = 2 ADP</text>
        <dbReference type="Rhea" id="RHEA:12973"/>
        <dbReference type="ChEBI" id="CHEBI:30616"/>
        <dbReference type="ChEBI" id="CHEBI:456215"/>
        <dbReference type="ChEBI" id="CHEBI:456216"/>
        <dbReference type="EC" id="2.7.4.3"/>
    </reaction>
</comment>
<comment type="activity regulation">
    <text evidence="3">Inhibited by the dinucleoside pentaphosphate compound P1,P5-di(adenosine-5') pentaphosphate (AP5A).</text>
</comment>
<comment type="biophysicochemical properties">
    <kinetics>
        <KM evidence="3">50 uM for AMP (at 25 degrees Celsius and pH 6 or pH 7.4)</KM>
        <KM evidence="3">130 uM for ATP (at 25 degrees Celsius and pH 6)</KM>
        <KM evidence="3">120 uM for ATP (at 25 degrees Celsius and pH 7.4)</KM>
        <KM evidence="3">240 uM for GTP (at 25 degrees Celsius and pH 6)</KM>
        <Vmax evidence="3">75.0 umol/min/mg enzyme (at 25 degrees Celsius and pH 6)</Vmax>
        <text evidence="3">kcat is 35 sec(-1) (at 25 degrees Celsius and pH 6).</text>
    </kinetics>
    <phDependence>
        <text evidence="3">Optimum pH is 5.5.</text>
    </phDependence>
</comment>
<comment type="subcellular location">
    <subcellularLocation>
        <location evidence="4">Cytoplasm</location>
    </subcellularLocation>
</comment>
<comment type="similarity">
    <text evidence="2">Belongs to the adenylate kinase family.</text>
</comment>
<feature type="chain" id="PRO_0000455418" description="Adenylate kinase 1">
    <location>
        <begin position="1"/>
        <end position="242"/>
    </location>
</feature>
<feature type="region of interest" description="NMP" evidence="5 12">
    <location>
        <begin position="58"/>
        <end position="87"/>
    </location>
</feature>
<feature type="region of interest" description="LID" evidence="1">
    <location>
        <begin position="154"/>
        <end position="191"/>
    </location>
</feature>
<feature type="binding site" evidence="5 12">
    <location>
        <begin position="38"/>
        <end position="43"/>
    </location>
    <ligand>
        <name>ATP</name>
        <dbReference type="ChEBI" id="CHEBI:30616"/>
    </ligand>
</feature>
<feature type="binding site" evidence="5 12">
    <location>
        <position position="42"/>
    </location>
    <ligand>
        <name>ATP</name>
        <dbReference type="ChEBI" id="CHEBI:30616"/>
    </ligand>
</feature>
<feature type="binding site" evidence="5 12">
    <location>
        <position position="59"/>
    </location>
    <ligand>
        <name>AMP</name>
        <dbReference type="ChEBI" id="CHEBI:456215"/>
    </ligand>
</feature>
<feature type="binding site" evidence="5 12">
    <location>
        <position position="64"/>
    </location>
    <ligand>
        <name>AMP</name>
        <dbReference type="ChEBI" id="CHEBI:456215"/>
    </ligand>
</feature>
<feature type="binding site" evidence="5 12">
    <location>
        <begin position="85"/>
        <end position="87"/>
    </location>
    <ligand>
        <name>AMP</name>
        <dbReference type="ChEBI" id="CHEBI:456215"/>
    </ligand>
</feature>
<feature type="binding site" evidence="5 12">
    <location>
        <begin position="113"/>
        <end position="116"/>
    </location>
    <ligand>
        <name>AMP</name>
        <dbReference type="ChEBI" id="CHEBI:456215"/>
    </ligand>
</feature>
<feature type="binding site" evidence="5 12">
    <location>
        <position position="113"/>
    </location>
    <ligand>
        <name>AMP</name>
        <dbReference type="ChEBI" id="CHEBI:456215"/>
    </ligand>
</feature>
<feature type="binding site" evidence="5 12">
    <location>
        <position position="120"/>
    </location>
    <ligand>
        <name>AMP</name>
        <dbReference type="ChEBI" id="CHEBI:456215"/>
    </ligand>
</feature>
<feature type="binding site" evidence="5 12">
    <location>
        <position position="155"/>
    </location>
    <ligand>
        <name>ATP</name>
        <dbReference type="ChEBI" id="CHEBI:30616"/>
    </ligand>
</feature>
<feature type="binding site" evidence="5 12">
    <location>
        <position position="165"/>
    </location>
    <ligand>
        <name>ATP</name>
        <dbReference type="ChEBI" id="CHEBI:30616"/>
    </ligand>
</feature>
<feature type="binding site" evidence="5 12">
    <location>
        <position position="199"/>
    </location>
    <ligand>
        <name>AMP</name>
        <dbReference type="ChEBI" id="CHEBI:456215"/>
    </ligand>
</feature>
<feature type="binding site" evidence="5 12">
    <location>
        <position position="229"/>
    </location>
    <ligand>
        <name>ATP</name>
        <dbReference type="ChEBI" id="CHEBI:30616"/>
    </ligand>
</feature>
<feature type="turn" evidence="13">
    <location>
        <begin position="5"/>
        <end position="7"/>
    </location>
</feature>
<feature type="helix" evidence="13">
    <location>
        <begin position="10"/>
        <end position="24"/>
    </location>
</feature>
<feature type="strand" evidence="13">
    <location>
        <begin position="29"/>
        <end position="34"/>
    </location>
</feature>
<feature type="helix" evidence="13">
    <location>
        <begin position="41"/>
        <end position="52"/>
    </location>
</feature>
<feature type="strand" evidence="13">
    <location>
        <begin position="55"/>
        <end position="58"/>
    </location>
</feature>
<feature type="helix" evidence="13">
    <location>
        <begin position="59"/>
        <end position="66"/>
    </location>
</feature>
<feature type="strand" evidence="13">
    <location>
        <begin position="69"/>
        <end position="71"/>
    </location>
</feature>
<feature type="helix" evidence="13">
    <location>
        <begin position="72"/>
        <end position="82"/>
    </location>
</feature>
<feature type="helix" evidence="13">
    <location>
        <begin position="89"/>
        <end position="99"/>
    </location>
</feature>
<feature type="helix" evidence="13">
    <location>
        <begin position="103"/>
        <end position="105"/>
    </location>
</feature>
<feature type="strand" evidence="13">
    <location>
        <begin position="106"/>
        <end position="113"/>
    </location>
</feature>
<feature type="helix" evidence="13">
    <location>
        <begin position="118"/>
        <end position="130"/>
    </location>
</feature>
<feature type="strand" evidence="13">
    <location>
        <begin position="137"/>
        <end position="142"/>
    </location>
</feature>
<feature type="helix" evidence="13">
    <location>
        <begin position="145"/>
        <end position="153"/>
    </location>
</feature>
<feature type="strand" evidence="13">
    <location>
        <begin position="155"/>
        <end position="158"/>
    </location>
</feature>
<feature type="turn" evidence="13">
    <location>
        <begin position="159"/>
        <end position="162"/>
    </location>
</feature>
<feature type="strand" evidence="13">
    <location>
        <begin position="163"/>
        <end position="166"/>
    </location>
</feature>
<feature type="turn" evidence="13">
    <location>
        <begin position="167"/>
        <end position="169"/>
    </location>
</feature>
<feature type="turn" evidence="13">
    <location>
        <begin position="179"/>
        <end position="181"/>
    </location>
</feature>
<feature type="helix" evidence="13">
    <location>
        <begin position="189"/>
        <end position="191"/>
    </location>
</feature>
<feature type="helix" evidence="13">
    <location>
        <begin position="193"/>
        <end position="206"/>
    </location>
</feature>
<feature type="turn" evidence="13">
    <location>
        <begin position="207"/>
        <end position="209"/>
    </location>
</feature>
<feature type="helix" evidence="13">
    <location>
        <begin position="210"/>
        <end position="216"/>
    </location>
</feature>
<feature type="strand" evidence="13">
    <location>
        <begin position="220"/>
        <end position="224"/>
    </location>
</feature>
<feature type="helix" evidence="13">
    <location>
        <begin position="229"/>
        <end position="241"/>
    </location>
</feature>